<name>Y5602_DICDI</name>
<gene>
    <name type="ORF">DDB_G0281465</name>
</gene>
<protein>
    <recommendedName>
        <fullName>Putative uncharacterized transmembrane protein DDB_G0281465</fullName>
    </recommendedName>
</protein>
<dbReference type="EMBL" id="AAFI02000041">
    <property type="protein sequence ID" value="EAL66714.1"/>
    <property type="molecule type" value="Genomic_DNA"/>
</dbReference>
<dbReference type="RefSeq" id="XP_640696.1">
    <property type="nucleotide sequence ID" value="XM_635604.1"/>
</dbReference>
<dbReference type="SMR" id="Q54TW5"/>
<dbReference type="FunCoup" id="Q54TW5">
    <property type="interactions" value="744"/>
</dbReference>
<dbReference type="PaxDb" id="44689-DDB0205602"/>
<dbReference type="EnsemblProtists" id="EAL66714">
    <property type="protein sequence ID" value="EAL66714"/>
    <property type="gene ID" value="DDB_G0281465"/>
</dbReference>
<dbReference type="GeneID" id="8623082"/>
<dbReference type="KEGG" id="ddi:DDB_G0281465"/>
<dbReference type="dictyBase" id="DDB_G0281465"/>
<dbReference type="VEuPathDB" id="AmoebaDB:DDB_G0281465"/>
<dbReference type="eggNOG" id="ENOG502RCJR">
    <property type="taxonomic scope" value="Eukaryota"/>
</dbReference>
<dbReference type="HOGENOM" id="CLU_607535_0_0_1"/>
<dbReference type="InParanoid" id="Q54TW5"/>
<dbReference type="OMA" id="NPSKREC"/>
<dbReference type="PRO" id="PR:Q54TW5"/>
<dbReference type="Proteomes" id="UP000002195">
    <property type="component" value="Chromosome 3"/>
</dbReference>
<dbReference type="GO" id="GO:0016020">
    <property type="term" value="C:membrane"/>
    <property type="evidence" value="ECO:0007669"/>
    <property type="project" value="UniProtKB-SubCell"/>
</dbReference>
<reference key="1">
    <citation type="journal article" date="2005" name="Nature">
        <title>The genome of the social amoeba Dictyostelium discoideum.</title>
        <authorList>
            <person name="Eichinger L."/>
            <person name="Pachebat J.A."/>
            <person name="Gloeckner G."/>
            <person name="Rajandream M.A."/>
            <person name="Sucgang R."/>
            <person name="Berriman M."/>
            <person name="Song J."/>
            <person name="Olsen R."/>
            <person name="Szafranski K."/>
            <person name="Xu Q."/>
            <person name="Tunggal B."/>
            <person name="Kummerfeld S."/>
            <person name="Madera M."/>
            <person name="Konfortov B.A."/>
            <person name="Rivero F."/>
            <person name="Bankier A.T."/>
            <person name="Lehmann R."/>
            <person name="Hamlin N."/>
            <person name="Davies R."/>
            <person name="Gaudet P."/>
            <person name="Fey P."/>
            <person name="Pilcher K."/>
            <person name="Chen G."/>
            <person name="Saunders D."/>
            <person name="Sodergren E.J."/>
            <person name="Davis P."/>
            <person name="Kerhornou A."/>
            <person name="Nie X."/>
            <person name="Hall N."/>
            <person name="Anjard C."/>
            <person name="Hemphill L."/>
            <person name="Bason N."/>
            <person name="Farbrother P."/>
            <person name="Desany B."/>
            <person name="Just E."/>
            <person name="Morio T."/>
            <person name="Rost R."/>
            <person name="Churcher C.M."/>
            <person name="Cooper J."/>
            <person name="Haydock S."/>
            <person name="van Driessche N."/>
            <person name="Cronin A."/>
            <person name="Goodhead I."/>
            <person name="Muzny D.M."/>
            <person name="Mourier T."/>
            <person name="Pain A."/>
            <person name="Lu M."/>
            <person name="Harper D."/>
            <person name="Lindsay R."/>
            <person name="Hauser H."/>
            <person name="James K.D."/>
            <person name="Quiles M."/>
            <person name="Madan Babu M."/>
            <person name="Saito T."/>
            <person name="Buchrieser C."/>
            <person name="Wardroper A."/>
            <person name="Felder M."/>
            <person name="Thangavelu M."/>
            <person name="Johnson D."/>
            <person name="Knights A."/>
            <person name="Loulseged H."/>
            <person name="Mungall K.L."/>
            <person name="Oliver K."/>
            <person name="Price C."/>
            <person name="Quail M.A."/>
            <person name="Urushihara H."/>
            <person name="Hernandez J."/>
            <person name="Rabbinowitsch E."/>
            <person name="Steffen D."/>
            <person name="Sanders M."/>
            <person name="Ma J."/>
            <person name="Kohara Y."/>
            <person name="Sharp S."/>
            <person name="Simmonds M.N."/>
            <person name="Spiegler S."/>
            <person name="Tivey A."/>
            <person name="Sugano S."/>
            <person name="White B."/>
            <person name="Walker D."/>
            <person name="Woodward J.R."/>
            <person name="Winckler T."/>
            <person name="Tanaka Y."/>
            <person name="Shaulsky G."/>
            <person name="Schleicher M."/>
            <person name="Weinstock G.M."/>
            <person name="Rosenthal A."/>
            <person name="Cox E.C."/>
            <person name="Chisholm R.L."/>
            <person name="Gibbs R.A."/>
            <person name="Loomis W.F."/>
            <person name="Platzer M."/>
            <person name="Kay R.R."/>
            <person name="Williams J.G."/>
            <person name="Dear P.H."/>
            <person name="Noegel A.A."/>
            <person name="Barrell B.G."/>
            <person name="Kuspa A."/>
        </authorList>
    </citation>
    <scope>NUCLEOTIDE SEQUENCE [LARGE SCALE GENOMIC DNA]</scope>
    <source>
        <strain>AX4</strain>
    </source>
</reference>
<accession>Q54TW5</accession>
<keyword id="KW-0472">Membrane</keyword>
<keyword id="KW-1185">Reference proteome</keyword>
<keyword id="KW-0812">Transmembrane</keyword>
<keyword id="KW-1133">Transmembrane helix</keyword>
<feature type="chain" id="PRO_0000352434" description="Putative uncharacterized transmembrane protein DDB_G0281465">
    <location>
        <begin position="1"/>
        <end position="451"/>
    </location>
</feature>
<feature type="transmembrane region" description="Helical" evidence="1">
    <location>
        <begin position="11"/>
        <end position="31"/>
    </location>
</feature>
<feature type="transmembrane region" description="Helical" evidence="1">
    <location>
        <begin position="56"/>
        <end position="76"/>
    </location>
</feature>
<feature type="transmembrane region" description="Helical" evidence="1">
    <location>
        <begin position="151"/>
        <end position="171"/>
    </location>
</feature>
<feature type="transmembrane region" description="Helical" evidence="1">
    <location>
        <begin position="175"/>
        <end position="195"/>
    </location>
</feature>
<feature type="transmembrane region" description="Helical" evidence="1">
    <location>
        <begin position="207"/>
        <end position="227"/>
    </location>
</feature>
<feature type="transmembrane region" description="Helical" evidence="1">
    <location>
        <begin position="392"/>
        <end position="412"/>
    </location>
</feature>
<feature type="transmembrane region" description="Helical" evidence="1">
    <location>
        <begin position="413"/>
        <end position="433"/>
    </location>
</feature>
<feature type="region of interest" description="Disordered" evidence="2">
    <location>
        <begin position="250"/>
        <end position="300"/>
    </location>
</feature>
<feature type="compositionally biased region" description="Low complexity" evidence="2">
    <location>
        <begin position="253"/>
        <end position="262"/>
    </location>
</feature>
<feature type="compositionally biased region" description="Low complexity" evidence="2">
    <location>
        <begin position="280"/>
        <end position="300"/>
    </location>
</feature>
<evidence type="ECO:0000255" key="1"/>
<evidence type="ECO:0000256" key="2">
    <source>
        <dbReference type="SAM" id="MobiDB-lite"/>
    </source>
</evidence>
<evidence type="ECO:0000305" key="3"/>
<sequence>MEISPTKIKSVLLKLIQILFFTISISIYIDLVGNSNNKNNINNNINNEELLLNKQIQIYYWFVGIILFSIAWSIGTFKWLSRFFLTFFIIKSIQQLIQHLPIEFYDKLRNLIVFGTFSKFDFTSTGIITESLPTLYDNFFGGNISPFSIEIIGIQSCLIIFFSTLGFNIYLADKFWLIKTIIVDWIISAILLIIFSITDLLMNQSNVYSVISYIFGSNVLGFGTIKIQEFLWNLSSKYDDKLNSTIIKSTKSNNNNNNNNNNKQDDNIIYDTDSSFNGQSSSSSSSSSSSSSSSSSATTTTTTLVNDNSIISEYVTEKIMIEENGEIKEQEVQVDKLDYSKLNEDQLNAILSEPILETQITTRNVSYHKSTRFINNLIAPENINSRISAKEFVGVIILWVYTISNFIISDYSLLTIPNILVVVGFSGTILTYLSTISAKRLTNKNPSKREC</sequence>
<proteinExistence type="predicted"/>
<organism>
    <name type="scientific">Dictyostelium discoideum</name>
    <name type="common">Social amoeba</name>
    <dbReference type="NCBI Taxonomy" id="44689"/>
    <lineage>
        <taxon>Eukaryota</taxon>
        <taxon>Amoebozoa</taxon>
        <taxon>Evosea</taxon>
        <taxon>Eumycetozoa</taxon>
        <taxon>Dictyostelia</taxon>
        <taxon>Dictyosteliales</taxon>
        <taxon>Dictyosteliaceae</taxon>
        <taxon>Dictyostelium</taxon>
    </lineage>
</organism>
<comment type="subcellular location">
    <subcellularLocation>
        <location evidence="3">Membrane</location>
        <topology evidence="3">Multi-pass membrane protein</topology>
    </subcellularLocation>
</comment>